<name>REG2_DROME</name>
<protein>
    <recommendedName>
        <fullName>Rhythmically expressed gene 2 protein</fullName>
    </recommendedName>
    <alternativeName>
        <fullName>dREG-2</fullName>
    </alternativeName>
</protein>
<organism>
    <name type="scientific">Drosophila melanogaster</name>
    <name type="common">Fruit fly</name>
    <dbReference type="NCBI Taxonomy" id="7227"/>
    <lineage>
        <taxon>Eukaryota</taxon>
        <taxon>Metazoa</taxon>
        <taxon>Ecdysozoa</taxon>
        <taxon>Arthropoda</taxon>
        <taxon>Hexapoda</taxon>
        <taxon>Insecta</taxon>
        <taxon>Pterygota</taxon>
        <taxon>Neoptera</taxon>
        <taxon>Endopterygota</taxon>
        <taxon>Diptera</taxon>
        <taxon>Brachycera</taxon>
        <taxon>Muscomorpha</taxon>
        <taxon>Ephydroidea</taxon>
        <taxon>Drosophilidae</taxon>
        <taxon>Drosophila</taxon>
        <taxon>Sophophora</taxon>
    </lineage>
</organism>
<reference key="1">
    <citation type="journal article" date="1995" name="Curr. Biol.">
        <title>Extent and character of circadian gene expression in Drosophila melanogaster: identification of twenty oscillating mRNAs in the fly head.</title>
        <authorList>
            <person name="van Gelder R.N."/>
            <person name="Bae H."/>
            <person name="Palazzolo M.J."/>
            <person name="Krasnow M.A."/>
        </authorList>
    </citation>
    <scope>NUCLEOTIDE SEQUENCE</scope>
    <source>
        <strain>Canton-S</strain>
    </source>
</reference>
<reference key="2">
    <citation type="journal article" date="2000" name="Science">
        <title>The genome sequence of Drosophila melanogaster.</title>
        <authorList>
            <person name="Adams M.D."/>
            <person name="Celniker S.E."/>
            <person name="Holt R.A."/>
            <person name="Evans C.A."/>
            <person name="Gocayne J.D."/>
            <person name="Amanatides P.G."/>
            <person name="Scherer S.E."/>
            <person name="Li P.W."/>
            <person name="Hoskins R.A."/>
            <person name="Galle R.F."/>
            <person name="George R.A."/>
            <person name="Lewis S.E."/>
            <person name="Richards S."/>
            <person name="Ashburner M."/>
            <person name="Henderson S.N."/>
            <person name="Sutton G.G."/>
            <person name="Wortman J.R."/>
            <person name="Yandell M.D."/>
            <person name="Zhang Q."/>
            <person name="Chen L.X."/>
            <person name="Brandon R.C."/>
            <person name="Rogers Y.-H.C."/>
            <person name="Blazej R.G."/>
            <person name="Champe M."/>
            <person name="Pfeiffer B.D."/>
            <person name="Wan K.H."/>
            <person name="Doyle C."/>
            <person name="Baxter E.G."/>
            <person name="Helt G."/>
            <person name="Nelson C.R."/>
            <person name="Miklos G.L.G."/>
            <person name="Abril J.F."/>
            <person name="Agbayani A."/>
            <person name="An H.-J."/>
            <person name="Andrews-Pfannkoch C."/>
            <person name="Baldwin D."/>
            <person name="Ballew R.M."/>
            <person name="Basu A."/>
            <person name="Baxendale J."/>
            <person name="Bayraktaroglu L."/>
            <person name="Beasley E.M."/>
            <person name="Beeson K.Y."/>
            <person name="Benos P.V."/>
            <person name="Berman B.P."/>
            <person name="Bhandari D."/>
            <person name="Bolshakov S."/>
            <person name="Borkova D."/>
            <person name="Botchan M.R."/>
            <person name="Bouck J."/>
            <person name="Brokstein P."/>
            <person name="Brottier P."/>
            <person name="Burtis K.C."/>
            <person name="Busam D.A."/>
            <person name="Butler H."/>
            <person name="Cadieu E."/>
            <person name="Center A."/>
            <person name="Chandra I."/>
            <person name="Cherry J.M."/>
            <person name="Cawley S."/>
            <person name="Dahlke C."/>
            <person name="Davenport L.B."/>
            <person name="Davies P."/>
            <person name="de Pablos B."/>
            <person name="Delcher A."/>
            <person name="Deng Z."/>
            <person name="Mays A.D."/>
            <person name="Dew I."/>
            <person name="Dietz S.M."/>
            <person name="Dodson K."/>
            <person name="Doup L.E."/>
            <person name="Downes M."/>
            <person name="Dugan-Rocha S."/>
            <person name="Dunkov B.C."/>
            <person name="Dunn P."/>
            <person name="Durbin K.J."/>
            <person name="Evangelista C.C."/>
            <person name="Ferraz C."/>
            <person name="Ferriera S."/>
            <person name="Fleischmann W."/>
            <person name="Fosler C."/>
            <person name="Gabrielian A.E."/>
            <person name="Garg N.S."/>
            <person name="Gelbart W.M."/>
            <person name="Glasser K."/>
            <person name="Glodek A."/>
            <person name="Gong F."/>
            <person name="Gorrell J.H."/>
            <person name="Gu Z."/>
            <person name="Guan P."/>
            <person name="Harris M."/>
            <person name="Harris N.L."/>
            <person name="Harvey D.A."/>
            <person name="Heiman T.J."/>
            <person name="Hernandez J.R."/>
            <person name="Houck J."/>
            <person name="Hostin D."/>
            <person name="Houston K.A."/>
            <person name="Howland T.J."/>
            <person name="Wei M.-H."/>
            <person name="Ibegwam C."/>
            <person name="Jalali M."/>
            <person name="Kalush F."/>
            <person name="Karpen G.H."/>
            <person name="Ke Z."/>
            <person name="Kennison J.A."/>
            <person name="Ketchum K.A."/>
            <person name="Kimmel B.E."/>
            <person name="Kodira C.D."/>
            <person name="Kraft C.L."/>
            <person name="Kravitz S."/>
            <person name="Kulp D."/>
            <person name="Lai Z."/>
            <person name="Lasko P."/>
            <person name="Lei Y."/>
            <person name="Levitsky A.A."/>
            <person name="Li J.H."/>
            <person name="Li Z."/>
            <person name="Liang Y."/>
            <person name="Lin X."/>
            <person name="Liu X."/>
            <person name="Mattei B."/>
            <person name="McIntosh T.C."/>
            <person name="McLeod M.P."/>
            <person name="McPherson D."/>
            <person name="Merkulov G."/>
            <person name="Milshina N.V."/>
            <person name="Mobarry C."/>
            <person name="Morris J."/>
            <person name="Moshrefi A."/>
            <person name="Mount S.M."/>
            <person name="Moy M."/>
            <person name="Murphy B."/>
            <person name="Murphy L."/>
            <person name="Muzny D.M."/>
            <person name="Nelson D.L."/>
            <person name="Nelson D.R."/>
            <person name="Nelson K.A."/>
            <person name="Nixon K."/>
            <person name="Nusskern D.R."/>
            <person name="Pacleb J.M."/>
            <person name="Palazzolo M."/>
            <person name="Pittman G.S."/>
            <person name="Pan S."/>
            <person name="Pollard J."/>
            <person name="Puri V."/>
            <person name="Reese M.G."/>
            <person name="Reinert K."/>
            <person name="Remington K."/>
            <person name="Saunders R.D.C."/>
            <person name="Scheeler F."/>
            <person name="Shen H."/>
            <person name="Shue B.C."/>
            <person name="Siden-Kiamos I."/>
            <person name="Simpson M."/>
            <person name="Skupski M.P."/>
            <person name="Smith T.J."/>
            <person name="Spier E."/>
            <person name="Spradling A.C."/>
            <person name="Stapleton M."/>
            <person name="Strong R."/>
            <person name="Sun E."/>
            <person name="Svirskas R."/>
            <person name="Tector C."/>
            <person name="Turner R."/>
            <person name="Venter E."/>
            <person name="Wang A.H."/>
            <person name="Wang X."/>
            <person name="Wang Z.-Y."/>
            <person name="Wassarman D.A."/>
            <person name="Weinstock G.M."/>
            <person name="Weissenbach J."/>
            <person name="Williams S.M."/>
            <person name="Woodage T."/>
            <person name="Worley K.C."/>
            <person name="Wu D."/>
            <person name="Yang S."/>
            <person name="Yao Q.A."/>
            <person name="Ye J."/>
            <person name="Yeh R.-F."/>
            <person name="Zaveri J.S."/>
            <person name="Zhan M."/>
            <person name="Zhang G."/>
            <person name="Zhao Q."/>
            <person name="Zheng L."/>
            <person name="Zheng X.H."/>
            <person name="Zhong F.N."/>
            <person name="Zhong W."/>
            <person name="Zhou X."/>
            <person name="Zhu S.C."/>
            <person name="Zhu X."/>
            <person name="Smith H.O."/>
            <person name="Gibbs R.A."/>
            <person name="Myers E.W."/>
            <person name="Rubin G.M."/>
            <person name="Venter J.C."/>
        </authorList>
    </citation>
    <scope>NUCLEOTIDE SEQUENCE [LARGE SCALE GENOMIC DNA]</scope>
    <source>
        <strain>Berkeley</strain>
    </source>
</reference>
<reference key="3">
    <citation type="journal article" date="2002" name="Genome Biol.">
        <title>Annotation of the Drosophila melanogaster euchromatic genome: a systematic review.</title>
        <authorList>
            <person name="Misra S."/>
            <person name="Crosby M.A."/>
            <person name="Mungall C.J."/>
            <person name="Matthews B.B."/>
            <person name="Campbell K.S."/>
            <person name="Hradecky P."/>
            <person name="Huang Y."/>
            <person name="Kaminker J.S."/>
            <person name="Millburn G.H."/>
            <person name="Prochnik S.E."/>
            <person name="Smith C.D."/>
            <person name="Tupy J.L."/>
            <person name="Whitfield E.J."/>
            <person name="Bayraktaroglu L."/>
            <person name="Berman B.P."/>
            <person name="Bettencourt B.R."/>
            <person name="Celniker S.E."/>
            <person name="de Grey A.D.N.J."/>
            <person name="Drysdale R.A."/>
            <person name="Harris N.L."/>
            <person name="Richter J."/>
            <person name="Russo S."/>
            <person name="Schroeder A.J."/>
            <person name="Shu S.Q."/>
            <person name="Stapleton M."/>
            <person name="Yamada C."/>
            <person name="Ashburner M."/>
            <person name="Gelbart W.M."/>
            <person name="Rubin G.M."/>
            <person name="Lewis S.E."/>
        </authorList>
    </citation>
    <scope>GENOME REANNOTATION</scope>
    <source>
        <strain>Berkeley</strain>
    </source>
</reference>
<gene>
    <name type="primary">Reg-2</name>
    <name type="ORF">CG3200</name>
</gene>
<keyword id="KW-1185">Reference proteome</keyword>
<sequence>MRSLSRFRLITFDVTNTLLQFRTTPGKQYGEIGALFGARCDNNELAKNFKANWYKMNRDYPNFGRDTNPQMEWQQWWRKLIAGTFAESGAAIPDEKLHNFSNHLIELYKTSICWQPCNGSVELLQQLRKELKPEKCKLGVIANFDPRLPTLLQNTKLDQYLDFAINSYEVQAEKPDPQIFQKAMEKSGLKNLKPEECLHIGDGPTTDYLAAKELGWHSALVHEKSYAYLVKKYGEDIDRDHVFPSLYDFHKKISDGAVVW</sequence>
<comment type="induction">
    <text>Maximally expressed at predawn or early morning.</text>
</comment>
<accession>Q94915</accession>
<accession>Q9W0P6</accession>
<dbReference type="EMBL" id="U65492">
    <property type="protein sequence ID" value="AAC47289.1"/>
    <property type="molecule type" value="mRNA"/>
</dbReference>
<dbReference type="EMBL" id="AE014296">
    <property type="protein sequence ID" value="AAF47397.1"/>
    <property type="molecule type" value="Genomic_DNA"/>
</dbReference>
<dbReference type="RefSeq" id="NP_612043.1">
    <property type="nucleotide sequence ID" value="NM_138199.3"/>
</dbReference>
<dbReference type="SMR" id="Q94915"/>
<dbReference type="BioGRID" id="63630">
    <property type="interactions" value="2"/>
</dbReference>
<dbReference type="FunCoup" id="Q94915">
    <property type="interactions" value="525"/>
</dbReference>
<dbReference type="STRING" id="7227.FBpp0072460"/>
<dbReference type="GlyGen" id="Q94915">
    <property type="glycosylation" value="1 site"/>
</dbReference>
<dbReference type="PaxDb" id="7227-FBpp0072460"/>
<dbReference type="DNASU" id="38075"/>
<dbReference type="EnsemblMetazoa" id="FBtr0072561">
    <property type="protein sequence ID" value="FBpp0072460"/>
    <property type="gene ID" value="FBgn0016715"/>
</dbReference>
<dbReference type="GeneID" id="38075"/>
<dbReference type="KEGG" id="dme:Dmel_CG3200"/>
<dbReference type="AGR" id="FB:FBgn0016715"/>
<dbReference type="CTD" id="38075"/>
<dbReference type="FlyBase" id="FBgn0016715">
    <property type="gene designation" value="Reg-2"/>
</dbReference>
<dbReference type="VEuPathDB" id="VectorBase:FBgn0016715"/>
<dbReference type="eggNOG" id="KOG3085">
    <property type="taxonomic scope" value="Eukaryota"/>
</dbReference>
<dbReference type="GeneTree" id="ENSGT00940000168936"/>
<dbReference type="HOGENOM" id="CLU_045011_8_0_1"/>
<dbReference type="InParanoid" id="Q94915"/>
<dbReference type="OMA" id="WWRQLIA"/>
<dbReference type="OrthoDB" id="444127at2759"/>
<dbReference type="PhylomeDB" id="Q94915"/>
<dbReference type="BioGRID-ORCS" id="38075">
    <property type="hits" value="1 hit in 3 CRISPR screens"/>
</dbReference>
<dbReference type="GenomeRNAi" id="38075"/>
<dbReference type="PRO" id="PR:Q94915"/>
<dbReference type="Proteomes" id="UP000000803">
    <property type="component" value="Chromosome 3L"/>
</dbReference>
<dbReference type="Bgee" id="FBgn0016715">
    <property type="expression patterns" value="Expressed in adult anterior midgut class II enteroendocrine cell in adult midgut (Drosophila) and 75 other cell types or tissues"/>
</dbReference>
<dbReference type="ExpressionAtlas" id="Q94915">
    <property type="expression patterns" value="baseline and differential"/>
</dbReference>
<dbReference type="GO" id="GO:0005739">
    <property type="term" value="C:mitochondrion"/>
    <property type="evidence" value="ECO:0000250"/>
    <property type="project" value="FlyBase"/>
</dbReference>
<dbReference type="GO" id="GO:0005730">
    <property type="term" value="C:nucleolus"/>
    <property type="evidence" value="ECO:0000250"/>
    <property type="project" value="FlyBase"/>
</dbReference>
<dbReference type="GO" id="GO:0005634">
    <property type="term" value="C:nucleus"/>
    <property type="evidence" value="ECO:0000318"/>
    <property type="project" value="GO_Central"/>
</dbReference>
<dbReference type="CDD" id="cd16415">
    <property type="entry name" value="HAD_dREG-2_like"/>
    <property type="match status" value="1"/>
</dbReference>
<dbReference type="Gene3D" id="3.40.50.1000">
    <property type="entry name" value="HAD superfamily/HAD-like"/>
    <property type="match status" value="1"/>
</dbReference>
<dbReference type="Gene3D" id="1.10.150.720">
    <property type="entry name" value="Haloacid dehalogenase-like hydrolase"/>
    <property type="match status" value="1"/>
</dbReference>
<dbReference type="InterPro" id="IPR051828">
    <property type="entry name" value="HAD-like_hydrolase_domain"/>
</dbReference>
<dbReference type="InterPro" id="IPR036412">
    <property type="entry name" value="HAD-like_sf"/>
</dbReference>
<dbReference type="InterPro" id="IPR006439">
    <property type="entry name" value="HAD-SF_hydro_IA"/>
</dbReference>
<dbReference type="InterPro" id="IPR011949">
    <property type="entry name" value="HAD-SF_hydro_IA_REG-2-like"/>
</dbReference>
<dbReference type="InterPro" id="IPR044924">
    <property type="entry name" value="HAD-SF_hydro_IA_REG-2-like_cap"/>
</dbReference>
<dbReference type="InterPro" id="IPR023214">
    <property type="entry name" value="HAD_sf"/>
</dbReference>
<dbReference type="NCBIfam" id="TIGR02252">
    <property type="entry name" value="DREG-2"/>
    <property type="match status" value="1"/>
</dbReference>
<dbReference type="NCBIfam" id="TIGR01549">
    <property type="entry name" value="HAD-SF-IA-v1"/>
    <property type="match status" value="1"/>
</dbReference>
<dbReference type="PANTHER" id="PTHR46191">
    <property type="match status" value="1"/>
</dbReference>
<dbReference type="PANTHER" id="PTHR46191:SF2">
    <property type="entry name" value="HALOACID DEHALOGENASE-LIKE HYDROLASE DOMAIN-CONTAINING PROTEIN 3"/>
    <property type="match status" value="1"/>
</dbReference>
<dbReference type="Pfam" id="PF00702">
    <property type="entry name" value="Hydrolase"/>
    <property type="match status" value="1"/>
</dbReference>
<dbReference type="SFLD" id="SFLDG01129">
    <property type="entry name" value="C1.5:_HAD__Beta-PGM__Phosphata"/>
    <property type="match status" value="1"/>
</dbReference>
<dbReference type="SFLD" id="SFLDS00003">
    <property type="entry name" value="Haloacid_Dehalogenase"/>
    <property type="match status" value="1"/>
</dbReference>
<dbReference type="SUPFAM" id="SSF56784">
    <property type="entry name" value="HAD-like"/>
    <property type="match status" value="1"/>
</dbReference>
<proteinExistence type="evidence at transcript level"/>
<feature type="chain" id="PRO_0000097240" description="Rhythmically expressed gene 2 protein">
    <location>
        <begin position="1"/>
        <end position="260"/>
    </location>
</feature>